<reference key="1">
    <citation type="submission" date="2008-06" db="EMBL/GenBank/DDBJ databases">
        <title>Complete sequence of Stenotrophomonas maltophilia R551-3.</title>
        <authorList>
            <consortium name="US DOE Joint Genome Institute"/>
            <person name="Lucas S."/>
            <person name="Copeland A."/>
            <person name="Lapidus A."/>
            <person name="Glavina del Rio T."/>
            <person name="Dalin E."/>
            <person name="Tice H."/>
            <person name="Pitluck S."/>
            <person name="Chain P."/>
            <person name="Malfatti S."/>
            <person name="Shin M."/>
            <person name="Vergez L."/>
            <person name="Lang D."/>
            <person name="Schmutz J."/>
            <person name="Larimer F."/>
            <person name="Land M."/>
            <person name="Hauser L."/>
            <person name="Kyrpides N."/>
            <person name="Mikhailova N."/>
            <person name="Taghavi S."/>
            <person name="Monchy S."/>
            <person name="Newman L."/>
            <person name="Vangronsveld J."/>
            <person name="van der Lelie D."/>
            <person name="Richardson P."/>
        </authorList>
    </citation>
    <scope>NUCLEOTIDE SEQUENCE [LARGE SCALE GENOMIC DNA]</scope>
    <source>
        <strain>R551-3</strain>
    </source>
</reference>
<name>PANB_STRM5</name>
<sequence length="271" mass="28507">MSTHADSKPWTVPALAEAKRNGQKLVMLTAYDAGFARTFDANGVDLILIGDSLGMVVQGHDSTLPVTVADMVYHTRAVARVLQRALLVADLPFGADATPERALDASLQLLQAGAEMVKIEGAGFKVDIIRYLVEREIPVCAHLGLTPQSVLRLGGFKIQGRGDAARQLVEDARAVAAAGASIMVLECVPTPVAAEVTAAVDVPTIGIGAGPQCDGQVLVLHDFLGLDSGHRRPKFVKDFLAEGGSVAGATRAYADAVRDGSFPDEQHAYAQ</sequence>
<feature type="chain" id="PRO_1000097009" description="3-methyl-2-oxobutanoate hydroxymethyltransferase">
    <location>
        <begin position="1"/>
        <end position="271"/>
    </location>
</feature>
<feature type="active site" description="Proton acceptor" evidence="1">
    <location>
        <position position="186"/>
    </location>
</feature>
<feature type="binding site" evidence="1">
    <location>
        <begin position="51"/>
        <end position="52"/>
    </location>
    <ligand>
        <name>3-methyl-2-oxobutanoate</name>
        <dbReference type="ChEBI" id="CHEBI:11851"/>
    </ligand>
</feature>
<feature type="binding site" evidence="1">
    <location>
        <position position="51"/>
    </location>
    <ligand>
        <name>Mg(2+)</name>
        <dbReference type="ChEBI" id="CHEBI:18420"/>
    </ligand>
</feature>
<feature type="binding site" evidence="1">
    <location>
        <position position="90"/>
    </location>
    <ligand>
        <name>3-methyl-2-oxobutanoate</name>
        <dbReference type="ChEBI" id="CHEBI:11851"/>
    </ligand>
</feature>
<feature type="binding site" evidence="1">
    <location>
        <position position="90"/>
    </location>
    <ligand>
        <name>Mg(2+)</name>
        <dbReference type="ChEBI" id="CHEBI:18420"/>
    </ligand>
</feature>
<feature type="binding site" evidence="1">
    <location>
        <position position="118"/>
    </location>
    <ligand>
        <name>3-methyl-2-oxobutanoate</name>
        <dbReference type="ChEBI" id="CHEBI:11851"/>
    </ligand>
</feature>
<feature type="binding site" evidence="1">
    <location>
        <position position="120"/>
    </location>
    <ligand>
        <name>Mg(2+)</name>
        <dbReference type="ChEBI" id="CHEBI:18420"/>
    </ligand>
</feature>
<comment type="function">
    <text evidence="1">Catalyzes the reversible reaction in which hydroxymethyl group from 5,10-methylenetetrahydrofolate is transferred onto alpha-ketoisovalerate to form ketopantoate.</text>
</comment>
<comment type="catalytic activity">
    <reaction evidence="1">
        <text>3-methyl-2-oxobutanoate + (6R)-5,10-methylene-5,6,7,8-tetrahydrofolate + H2O = 2-dehydropantoate + (6S)-5,6,7,8-tetrahydrofolate</text>
        <dbReference type="Rhea" id="RHEA:11824"/>
        <dbReference type="ChEBI" id="CHEBI:11561"/>
        <dbReference type="ChEBI" id="CHEBI:11851"/>
        <dbReference type="ChEBI" id="CHEBI:15377"/>
        <dbReference type="ChEBI" id="CHEBI:15636"/>
        <dbReference type="ChEBI" id="CHEBI:57453"/>
        <dbReference type="EC" id="2.1.2.11"/>
    </reaction>
</comment>
<comment type="cofactor">
    <cofactor evidence="1">
        <name>Mg(2+)</name>
        <dbReference type="ChEBI" id="CHEBI:18420"/>
    </cofactor>
    <text evidence="1">Binds 1 Mg(2+) ion per subunit.</text>
</comment>
<comment type="pathway">
    <text evidence="1">Cofactor biosynthesis; (R)-pantothenate biosynthesis; (R)-pantoate from 3-methyl-2-oxobutanoate: step 1/2.</text>
</comment>
<comment type="subunit">
    <text evidence="1">Homodecamer; pentamer of dimers.</text>
</comment>
<comment type="subcellular location">
    <subcellularLocation>
        <location evidence="1">Cytoplasm</location>
    </subcellularLocation>
</comment>
<comment type="similarity">
    <text evidence="1">Belongs to the PanB family.</text>
</comment>
<organism>
    <name type="scientific">Stenotrophomonas maltophilia (strain R551-3)</name>
    <dbReference type="NCBI Taxonomy" id="391008"/>
    <lineage>
        <taxon>Bacteria</taxon>
        <taxon>Pseudomonadati</taxon>
        <taxon>Pseudomonadota</taxon>
        <taxon>Gammaproteobacteria</taxon>
        <taxon>Lysobacterales</taxon>
        <taxon>Lysobacteraceae</taxon>
        <taxon>Stenotrophomonas</taxon>
        <taxon>Stenotrophomonas maltophilia group</taxon>
    </lineage>
</organism>
<accession>B4SRY3</accession>
<keyword id="KW-0963">Cytoplasm</keyword>
<keyword id="KW-0460">Magnesium</keyword>
<keyword id="KW-0479">Metal-binding</keyword>
<keyword id="KW-0566">Pantothenate biosynthesis</keyword>
<keyword id="KW-0808">Transferase</keyword>
<dbReference type="EC" id="2.1.2.11" evidence="1"/>
<dbReference type="EMBL" id="CP001111">
    <property type="protein sequence ID" value="ACF51222.1"/>
    <property type="molecule type" value="Genomic_DNA"/>
</dbReference>
<dbReference type="RefSeq" id="WP_004153072.1">
    <property type="nucleotide sequence ID" value="NC_011071.1"/>
</dbReference>
<dbReference type="SMR" id="B4SRY3"/>
<dbReference type="STRING" id="391008.Smal_1517"/>
<dbReference type="KEGG" id="smt:Smal_1517"/>
<dbReference type="eggNOG" id="COG0413">
    <property type="taxonomic scope" value="Bacteria"/>
</dbReference>
<dbReference type="HOGENOM" id="CLU_036645_1_0_6"/>
<dbReference type="OrthoDB" id="9781789at2"/>
<dbReference type="UniPathway" id="UPA00028">
    <property type="reaction ID" value="UER00003"/>
</dbReference>
<dbReference type="Proteomes" id="UP000001867">
    <property type="component" value="Chromosome"/>
</dbReference>
<dbReference type="GO" id="GO:0005737">
    <property type="term" value="C:cytoplasm"/>
    <property type="evidence" value="ECO:0007669"/>
    <property type="project" value="UniProtKB-SubCell"/>
</dbReference>
<dbReference type="GO" id="GO:0003864">
    <property type="term" value="F:3-methyl-2-oxobutanoate hydroxymethyltransferase activity"/>
    <property type="evidence" value="ECO:0007669"/>
    <property type="project" value="UniProtKB-UniRule"/>
</dbReference>
<dbReference type="GO" id="GO:0000287">
    <property type="term" value="F:magnesium ion binding"/>
    <property type="evidence" value="ECO:0007669"/>
    <property type="project" value="TreeGrafter"/>
</dbReference>
<dbReference type="GO" id="GO:0015940">
    <property type="term" value="P:pantothenate biosynthetic process"/>
    <property type="evidence" value="ECO:0007669"/>
    <property type="project" value="UniProtKB-UniRule"/>
</dbReference>
<dbReference type="CDD" id="cd06557">
    <property type="entry name" value="KPHMT-like"/>
    <property type="match status" value="1"/>
</dbReference>
<dbReference type="FunFam" id="3.20.20.60:FF:000003">
    <property type="entry name" value="3-methyl-2-oxobutanoate hydroxymethyltransferase"/>
    <property type="match status" value="1"/>
</dbReference>
<dbReference type="Gene3D" id="3.20.20.60">
    <property type="entry name" value="Phosphoenolpyruvate-binding domains"/>
    <property type="match status" value="1"/>
</dbReference>
<dbReference type="HAMAP" id="MF_00156">
    <property type="entry name" value="PanB"/>
    <property type="match status" value="1"/>
</dbReference>
<dbReference type="InterPro" id="IPR003700">
    <property type="entry name" value="Pantoate_hydroxy_MeTrfase"/>
</dbReference>
<dbReference type="InterPro" id="IPR015813">
    <property type="entry name" value="Pyrv/PenolPyrv_kinase-like_dom"/>
</dbReference>
<dbReference type="InterPro" id="IPR040442">
    <property type="entry name" value="Pyrv_kinase-like_dom_sf"/>
</dbReference>
<dbReference type="NCBIfam" id="TIGR00222">
    <property type="entry name" value="panB"/>
    <property type="match status" value="1"/>
</dbReference>
<dbReference type="NCBIfam" id="NF001452">
    <property type="entry name" value="PRK00311.1"/>
    <property type="match status" value="1"/>
</dbReference>
<dbReference type="PANTHER" id="PTHR20881">
    <property type="entry name" value="3-METHYL-2-OXOBUTANOATE HYDROXYMETHYLTRANSFERASE"/>
    <property type="match status" value="1"/>
</dbReference>
<dbReference type="PANTHER" id="PTHR20881:SF0">
    <property type="entry name" value="3-METHYL-2-OXOBUTANOATE HYDROXYMETHYLTRANSFERASE"/>
    <property type="match status" value="1"/>
</dbReference>
<dbReference type="Pfam" id="PF02548">
    <property type="entry name" value="Pantoate_transf"/>
    <property type="match status" value="1"/>
</dbReference>
<dbReference type="PIRSF" id="PIRSF000388">
    <property type="entry name" value="Pantoate_hydroxy_MeTrfase"/>
    <property type="match status" value="1"/>
</dbReference>
<dbReference type="SUPFAM" id="SSF51621">
    <property type="entry name" value="Phosphoenolpyruvate/pyruvate domain"/>
    <property type="match status" value="1"/>
</dbReference>
<gene>
    <name evidence="1" type="primary">panB</name>
    <name type="ordered locus">Smal_1517</name>
</gene>
<proteinExistence type="inferred from homology"/>
<protein>
    <recommendedName>
        <fullName evidence="1">3-methyl-2-oxobutanoate hydroxymethyltransferase</fullName>
        <ecNumber evidence="1">2.1.2.11</ecNumber>
    </recommendedName>
    <alternativeName>
        <fullName evidence="1">Ketopantoate hydroxymethyltransferase</fullName>
        <shortName evidence="1">KPHMT</shortName>
    </alternativeName>
</protein>
<evidence type="ECO:0000255" key="1">
    <source>
        <dbReference type="HAMAP-Rule" id="MF_00156"/>
    </source>
</evidence>